<name>MDH_AERHH</name>
<evidence type="ECO:0000255" key="1">
    <source>
        <dbReference type="HAMAP-Rule" id="MF_01516"/>
    </source>
</evidence>
<protein>
    <recommendedName>
        <fullName evidence="1">Malate dehydrogenase</fullName>
        <ecNumber evidence="1">1.1.1.37</ecNumber>
    </recommendedName>
</protein>
<feature type="chain" id="PRO_0000294292" description="Malate dehydrogenase">
    <location>
        <begin position="1"/>
        <end position="311"/>
    </location>
</feature>
<feature type="active site" description="Proton acceptor" evidence="1">
    <location>
        <position position="177"/>
    </location>
</feature>
<feature type="binding site" evidence="1">
    <location>
        <begin position="7"/>
        <end position="13"/>
    </location>
    <ligand>
        <name>NAD(+)</name>
        <dbReference type="ChEBI" id="CHEBI:57540"/>
    </ligand>
</feature>
<feature type="binding site" evidence="1">
    <location>
        <position position="34"/>
    </location>
    <ligand>
        <name>NAD(+)</name>
        <dbReference type="ChEBI" id="CHEBI:57540"/>
    </ligand>
</feature>
<feature type="binding site" evidence="1">
    <location>
        <position position="81"/>
    </location>
    <ligand>
        <name>substrate</name>
    </ligand>
</feature>
<feature type="binding site" evidence="1">
    <location>
        <position position="87"/>
    </location>
    <ligand>
        <name>substrate</name>
    </ligand>
</feature>
<feature type="binding site" evidence="1">
    <location>
        <position position="94"/>
    </location>
    <ligand>
        <name>NAD(+)</name>
        <dbReference type="ChEBI" id="CHEBI:57540"/>
    </ligand>
</feature>
<feature type="binding site" evidence="1">
    <location>
        <begin position="117"/>
        <end position="119"/>
    </location>
    <ligand>
        <name>NAD(+)</name>
        <dbReference type="ChEBI" id="CHEBI:57540"/>
    </ligand>
</feature>
<feature type="binding site" evidence="1">
    <location>
        <position position="119"/>
    </location>
    <ligand>
        <name>substrate</name>
    </ligand>
</feature>
<feature type="binding site" evidence="1">
    <location>
        <position position="153"/>
    </location>
    <ligand>
        <name>substrate</name>
    </ligand>
</feature>
<feature type="binding site" evidence="1">
    <location>
        <position position="227"/>
    </location>
    <ligand>
        <name>NAD(+)</name>
        <dbReference type="ChEBI" id="CHEBI:57540"/>
    </ligand>
</feature>
<proteinExistence type="inferred from homology"/>
<sequence length="311" mass="32113">MKVAVLGAAGGIGQALALLLKNRLPAGSELSLYDIAPVTPGVAVDLSHIPTDVKVKGFCGEDPSPALVGADVVLISAGVARKPGMDRSDLFNINAGIVKNLVEKCAASCPKALIGIITNPVNTTVAIAAEVLKKAGVYDKRRLFGVTTLDVIRAETFVAEAKGLNVDKVRVNVIGGHSGVTILPLLSQIEGASFTADEVAAMTKRIQNAGTEVVEAKAGGGSATLSMGQAACRFGLSLIKGLQGEANVIECAYVEGDGKHATFFAQPILLGKNGVETVLDYGKLSAFEQEAMDGMLATLKADIQLGVEFVK</sequence>
<gene>
    <name evidence="1" type="primary">mdh</name>
    <name type="ordered locus">AHA_0659</name>
</gene>
<accession>A0KG16</accession>
<comment type="function">
    <text evidence="1">Catalyzes the reversible oxidation of malate to oxaloacetate.</text>
</comment>
<comment type="catalytic activity">
    <reaction evidence="1">
        <text>(S)-malate + NAD(+) = oxaloacetate + NADH + H(+)</text>
        <dbReference type="Rhea" id="RHEA:21432"/>
        <dbReference type="ChEBI" id="CHEBI:15378"/>
        <dbReference type="ChEBI" id="CHEBI:15589"/>
        <dbReference type="ChEBI" id="CHEBI:16452"/>
        <dbReference type="ChEBI" id="CHEBI:57540"/>
        <dbReference type="ChEBI" id="CHEBI:57945"/>
        <dbReference type="EC" id="1.1.1.37"/>
    </reaction>
</comment>
<comment type="subunit">
    <text evidence="1">Homodimer.</text>
</comment>
<comment type="similarity">
    <text evidence="1">Belongs to the LDH/MDH superfamily. MDH type 1 family.</text>
</comment>
<reference key="1">
    <citation type="journal article" date="2006" name="J. Bacteriol.">
        <title>Genome sequence of Aeromonas hydrophila ATCC 7966T: jack of all trades.</title>
        <authorList>
            <person name="Seshadri R."/>
            <person name="Joseph S.W."/>
            <person name="Chopra A.K."/>
            <person name="Sha J."/>
            <person name="Shaw J."/>
            <person name="Graf J."/>
            <person name="Haft D.H."/>
            <person name="Wu M."/>
            <person name="Ren Q."/>
            <person name="Rosovitz M.J."/>
            <person name="Madupu R."/>
            <person name="Tallon L."/>
            <person name="Kim M."/>
            <person name="Jin S."/>
            <person name="Vuong H."/>
            <person name="Stine O.C."/>
            <person name="Ali A."/>
            <person name="Horneman A.J."/>
            <person name="Heidelberg J.F."/>
        </authorList>
    </citation>
    <scope>NUCLEOTIDE SEQUENCE [LARGE SCALE GENOMIC DNA]</scope>
    <source>
        <strain>ATCC 7966 / DSM 30187 / BCRC 13018 / CCUG 14551 / JCM 1027 / KCTC 2358 / NCIMB 9240 / NCTC 8049</strain>
    </source>
</reference>
<dbReference type="EC" id="1.1.1.37" evidence="1"/>
<dbReference type="EMBL" id="CP000462">
    <property type="protein sequence ID" value="ABK35951.1"/>
    <property type="molecule type" value="Genomic_DNA"/>
</dbReference>
<dbReference type="RefSeq" id="WP_011704623.1">
    <property type="nucleotide sequence ID" value="NC_008570.1"/>
</dbReference>
<dbReference type="RefSeq" id="YP_855201.1">
    <property type="nucleotide sequence ID" value="NC_008570.1"/>
</dbReference>
<dbReference type="SMR" id="A0KG16"/>
<dbReference type="STRING" id="380703.AHA_0659"/>
<dbReference type="EnsemblBacteria" id="ABK35951">
    <property type="protein sequence ID" value="ABK35951"/>
    <property type="gene ID" value="AHA_0659"/>
</dbReference>
<dbReference type="GeneID" id="4486843"/>
<dbReference type="KEGG" id="aha:AHA_0659"/>
<dbReference type="PATRIC" id="fig|380703.7.peg.660"/>
<dbReference type="eggNOG" id="COG0039">
    <property type="taxonomic scope" value="Bacteria"/>
</dbReference>
<dbReference type="HOGENOM" id="CLU_047181_0_1_6"/>
<dbReference type="OrthoDB" id="9802969at2"/>
<dbReference type="Proteomes" id="UP000000756">
    <property type="component" value="Chromosome"/>
</dbReference>
<dbReference type="GO" id="GO:0005737">
    <property type="term" value="C:cytoplasm"/>
    <property type="evidence" value="ECO:0007669"/>
    <property type="project" value="TreeGrafter"/>
</dbReference>
<dbReference type="GO" id="GO:0030060">
    <property type="term" value="F:L-malate dehydrogenase (NAD+) activity"/>
    <property type="evidence" value="ECO:0007669"/>
    <property type="project" value="UniProtKB-UniRule"/>
</dbReference>
<dbReference type="GO" id="GO:0006108">
    <property type="term" value="P:malate metabolic process"/>
    <property type="evidence" value="ECO:0007669"/>
    <property type="project" value="InterPro"/>
</dbReference>
<dbReference type="GO" id="GO:0006099">
    <property type="term" value="P:tricarboxylic acid cycle"/>
    <property type="evidence" value="ECO:0007669"/>
    <property type="project" value="UniProtKB-UniRule"/>
</dbReference>
<dbReference type="CDD" id="cd01337">
    <property type="entry name" value="MDH_glyoxysomal_mitochondrial"/>
    <property type="match status" value="1"/>
</dbReference>
<dbReference type="FunFam" id="3.40.50.720:FF:000017">
    <property type="entry name" value="Malate dehydrogenase"/>
    <property type="match status" value="1"/>
</dbReference>
<dbReference type="FunFam" id="3.90.110.10:FF:000001">
    <property type="entry name" value="Malate dehydrogenase"/>
    <property type="match status" value="1"/>
</dbReference>
<dbReference type="Gene3D" id="3.90.110.10">
    <property type="entry name" value="Lactate dehydrogenase/glycoside hydrolase, family 4, C-terminal"/>
    <property type="match status" value="1"/>
</dbReference>
<dbReference type="Gene3D" id="3.40.50.720">
    <property type="entry name" value="NAD(P)-binding Rossmann-like Domain"/>
    <property type="match status" value="1"/>
</dbReference>
<dbReference type="HAMAP" id="MF_01516">
    <property type="entry name" value="Malate_dehydrog_1"/>
    <property type="match status" value="1"/>
</dbReference>
<dbReference type="InterPro" id="IPR001557">
    <property type="entry name" value="L-lactate/malate_DH"/>
</dbReference>
<dbReference type="InterPro" id="IPR022383">
    <property type="entry name" value="Lactate/malate_DH_C"/>
</dbReference>
<dbReference type="InterPro" id="IPR001236">
    <property type="entry name" value="Lactate/malate_DH_N"/>
</dbReference>
<dbReference type="InterPro" id="IPR015955">
    <property type="entry name" value="Lactate_DH/Glyco_Ohase_4_C"/>
</dbReference>
<dbReference type="InterPro" id="IPR001252">
    <property type="entry name" value="Malate_DH_AS"/>
</dbReference>
<dbReference type="InterPro" id="IPR010097">
    <property type="entry name" value="Malate_DH_type1"/>
</dbReference>
<dbReference type="InterPro" id="IPR023958">
    <property type="entry name" value="Malate_DH_type1_bac"/>
</dbReference>
<dbReference type="InterPro" id="IPR036291">
    <property type="entry name" value="NAD(P)-bd_dom_sf"/>
</dbReference>
<dbReference type="NCBIfam" id="TIGR01772">
    <property type="entry name" value="MDH_euk_gproteo"/>
    <property type="match status" value="1"/>
</dbReference>
<dbReference type="PANTHER" id="PTHR11540">
    <property type="entry name" value="MALATE AND LACTATE DEHYDROGENASE"/>
    <property type="match status" value="1"/>
</dbReference>
<dbReference type="PANTHER" id="PTHR11540:SF16">
    <property type="entry name" value="MALATE DEHYDROGENASE, MITOCHONDRIAL"/>
    <property type="match status" value="1"/>
</dbReference>
<dbReference type="Pfam" id="PF02866">
    <property type="entry name" value="Ldh_1_C"/>
    <property type="match status" value="1"/>
</dbReference>
<dbReference type="Pfam" id="PF00056">
    <property type="entry name" value="Ldh_1_N"/>
    <property type="match status" value="1"/>
</dbReference>
<dbReference type="PIRSF" id="PIRSF000102">
    <property type="entry name" value="Lac_mal_DH"/>
    <property type="match status" value="1"/>
</dbReference>
<dbReference type="SUPFAM" id="SSF56327">
    <property type="entry name" value="LDH C-terminal domain-like"/>
    <property type="match status" value="1"/>
</dbReference>
<dbReference type="SUPFAM" id="SSF51735">
    <property type="entry name" value="NAD(P)-binding Rossmann-fold domains"/>
    <property type="match status" value="1"/>
</dbReference>
<dbReference type="PROSITE" id="PS00068">
    <property type="entry name" value="MDH"/>
    <property type="match status" value="1"/>
</dbReference>
<organism>
    <name type="scientific">Aeromonas hydrophila subsp. hydrophila (strain ATCC 7966 / DSM 30187 / BCRC 13018 / CCUG 14551 / JCM 1027 / KCTC 2358 / NCIMB 9240 / NCTC 8049)</name>
    <dbReference type="NCBI Taxonomy" id="380703"/>
    <lineage>
        <taxon>Bacteria</taxon>
        <taxon>Pseudomonadati</taxon>
        <taxon>Pseudomonadota</taxon>
        <taxon>Gammaproteobacteria</taxon>
        <taxon>Aeromonadales</taxon>
        <taxon>Aeromonadaceae</taxon>
        <taxon>Aeromonas</taxon>
    </lineage>
</organism>
<keyword id="KW-0520">NAD</keyword>
<keyword id="KW-0560">Oxidoreductase</keyword>
<keyword id="KW-1185">Reference proteome</keyword>
<keyword id="KW-0816">Tricarboxylic acid cycle</keyword>